<sequence length="154" mass="17899">MIITTWIVYILARKGAGLPFPPKVSSDVEVTETEAVSVVQHWLKKTEEEASQEIKEKMSTNFPPMQGQDVHVTRDVVKHHLSKSGLLANQSQEVLEERTRIQFIRWSHTRIFQVPSEARNEAMRDRIEQVRRSICHLSDEISQELRNRNSYSEC</sequence>
<proteinExistence type="evidence at transcript level"/>
<accession>Q3SZQ3</accession>
<gene>
    <name type="primary">SPATA19</name>
</gene>
<protein>
    <recommendedName>
        <fullName>Spermatogenesis-associated protein 19, mitochondrial</fullName>
    </recommendedName>
</protein>
<dbReference type="EMBL" id="BC102751">
    <property type="protein sequence ID" value="AAI02752.1"/>
    <property type="molecule type" value="mRNA"/>
</dbReference>
<dbReference type="RefSeq" id="NP_001069966.1">
    <property type="nucleotide sequence ID" value="NM_001076498.2"/>
</dbReference>
<dbReference type="SMR" id="Q3SZQ3"/>
<dbReference type="FunCoup" id="Q3SZQ3">
    <property type="interactions" value="64"/>
</dbReference>
<dbReference type="STRING" id="9913.ENSBTAP00000019506"/>
<dbReference type="PaxDb" id="9913-ENSBTAP00000019506"/>
<dbReference type="Ensembl" id="ENSBTAT00000019506.3">
    <property type="protein sequence ID" value="ENSBTAP00000019506.2"/>
    <property type="gene ID" value="ENSBTAG00000014651.3"/>
</dbReference>
<dbReference type="GeneID" id="618276"/>
<dbReference type="KEGG" id="bta:618276"/>
<dbReference type="CTD" id="219938"/>
<dbReference type="VEuPathDB" id="HostDB:ENSBTAG00000014651"/>
<dbReference type="VGNC" id="VGNC:35177">
    <property type="gene designation" value="SPATA19"/>
</dbReference>
<dbReference type="eggNOG" id="ENOG502SAUZ">
    <property type="taxonomic scope" value="Eukaryota"/>
</dbReference>
<dbReference type="GeneTree" id="ENSGT00390000002749"/>
<dbReference type="HOGENOM" id="CLU_149699_0_0_1"/>
<dbReference type="InParanoid" id="Q3SZQ3"/>
<dbReference type="OMA" id="EHWLKKT"/>
<dbReference type="OrthoDB" id="9012529at2759"/>
<dbReference type="TreeFam" id="TF337965"/>
<dbReference type="Proteomes" id="UP000009136">
    <property type="component" value="Chromosome 29"/>
</dbReference>
<dbReference type="Bgee" id="ENSBTAG00000014651">
    <property type="expression patterns" value="Expressed in semen and 16 other cell types or tissues"/>
</dbReference>
<dbReference type="GO" id="GO:0005741">
    <property type="term" value="C:mitochondrial outer membrane"/>
    <property type="evidence" value="ECO:0000250"/>
    <property type="project" value="UniProtKB"/>
</dbReference>
<dbReference type="GO" id="GO:0036126">
    <property type="term" value="C:sperm flagellum"/>
    <property type="evidence" value="ECO:0000250"/>
    <property type="project" value="UniProtKB"/>
</dbReference>
<dbReference type="GO" id="GO:0097225">
    <property type="term" value="C:sperm midpiece"/>
    <property type="evidence" value="ECO:0000250"/>
    <property type="project" value="UniProtKB"/>
</dbReference>
<dbReference type="GO" id="GO:0030154">
    <property type="term" value="P:cell differentiation"/>
    <property type="evidence" value="ECO:0007669"/>
    <property type="project" value="UniProtKB-KW"/>
</dbReference>
<dbReference type="GO" id="GO:0030382">
    <property type="term" value="P:sperm mitochondrion organization"/>
    <property type="evidence" value="ECO:0000250"/>
    <property type="project" value="UniProtKB"/>
</dbReference>
<dbReference type="GO" id="GO:0007283">
    <property type="term" value="P:spermatogenesis"/>
    <property type="evidence" value="ECO:0007669"/>
    <property type="project" value="UniProtKB-KW"/>
</dbReference>
<dbReference type="InterPro" id="IPR028219">
    <property type="entry name" value="SPATA19"/>
</dbReference>
<dbReference type="PANTHER" id="PTHR36468">
    <property type="entry name" value="SPERMATOGENESIS-ASSOCIATED PROTEIN 19, MITOCHONDRIAL"/>
    <property type="match status" value="1"/>
</dbReference>
<dbReference type="PANTHER" id="PTHR36468:SF1">
    <property type="entry name" value="SPERMATOGENESIS-ASSOCIATED PROTEIN 19, MITOCHONDRIAL"/>
    <property type="match status" value="1"/>
</dbReference>
<dbReference type="Pfam" id="PF15212">
    <property type="entry name" value="SPATA19"/>
    <property type="match status" value="1"/>
</dbReference>
<evidence type="ECO:0000250" key="1"/>
<evidence type="ECO:0000250" key="2">
    <source>
        <dbReference type="UniProtKB" id="Q920Q3"/>
    </source>
</evidence>
<evidence type="ECO:0000250" key="3">
    <source>
        <dbReference type="UniProtKB" id="Q9DAQ9"/>
    </source>
</evidence>
<evidence type="ECO:0000255" key="4"/>
<name>SPT19_BOVIN</name>
<organism>
    <name type="scientific">Bos taurus</name>
    <name type="common">Bovine</name>
    <dbReference type="NCBI Taxonomy" id="9913"/>
    <lineage>
        <taxon>Eukaryota</taxon>
        <taxon>Metazoa</taxon>
        <taxon>Chordata</taxon>
        <taxon>Craniata</taxon>
        <taxon>Vertebrata</taxon>
        <taxon>Euteleostomi</taxon>
        <taxon>Mammalia</taxon>
        <taxon>Eutheria</taxon>
        <taxon>Laurasiatheria</taxon>
        <taxon>Artiodactyla</taxon>
        <taxon>Ruminantia</taxon>
        <taxon>Pecora</taxon>
        <taxon>Bovidae</taxon>
        <taxon>Bovinae</taxon>
        <taxon>Bos</taxon>
    </lineage>
</organism>
<keyword id="KW-0966">Cell projection</keyword>
<keyword id="KW-0969">Cilium</keyword>
<keyword id="KW-0217">Developmental protein</keyword>
<keyword id="KW-0221">Differentiation</keyword>
<keyword id="KW-0282">Flagellum</keyword>
<keyword id="KW-0472">Membrane</keyword>
<keyword id="KW-0496">Mitochondrion</keyword>
<keyword id="KW-1000">Mitochondrion outer membrane</keyword>
<keyword id="KW-0597">Phosphoprotein</keyword>
<keyword id="KW-1185">Reference proteome</keyword>
<keyword id="KW-0744">Spermatogenesis</keyword>
<keyword id="KW-0809">Transit peptide</keyword>
<comment type="function">
    <text evidence="3">Essential for sperm motility and male fertility (By similarity). Plays an important role in sperm motility by regulating the organization and function of the mitochondria and is also required for correct sperm midpiece assembly (By similarity).</text>
</comment>
<comment type="subcellular location">
    <subcellularLocation>
        <location evidence="3">Mitochondrion outer membrane</location>
    </subcellularLocation>
    <subcellularLocation>
        <location evidence="3">Mitochondrion</location>
    </subcellularLocation>
    <subcellularLocation>
        <location evidence="3">Cell projection</location>
        <location evidence="3">Cilium</location>
        <location evidence="3">Flagellum</location>
    </subcellularLocation>
    <text evidence="3">Localizes to the midpiece of the sperm flagellum.</text>
</comment>
<reference key="1">
    <citation type="submission" date="2005-08" db="EMBL/GenBank/DDBJ databases">
        <authorList>
            <consortium name="NIH - Mammalian Gene Collection (MGC) project"/>
        </authorList>
    </citation>
    <scope>NUCLEOTIDE SEQUENCE [LARGE SCALE MRNA]</scope>
    <source>
        <strain>Hereford</strain>
        <tissue>Testis</tissue>
    </source>
</reference>
<feature type="transit peptide" description="Mitochondrion" evidence="4">
    <location>
        <begin position="1"/>
        <end position="24"/>
    </location>
</feature>
<feature type="chain" id="PRO_0000251608" description="Spermatogenesis-associated protein 19, mitochondrial" evidence="1">
    <location>
        <begin position="25"/>
        <end position="154"/>
    </location>
</feature>
<feature type="modified residue" description="Phosphoserine" evidence="2">
    <location>
        <position position="26"/>
    </location>
</feature>
<feature type="modified residue" description="Phosphoserine" evidence="2">
    <location>
        <position position="116"/>
    </location>
</feature>